<protein>
    <recommendedName>
        <fullName evidence="1">Transcriptional regulator SlyA</fullName>
    </recommendedName>
</protein>
<reference key="1">
    <citation type="journal article" date="2002" name="Nucleic Acids Res.">
        <title>Genome sequence of Shigella flexneri 2a: insights into pathogenicity through comparison with genomes of Escherichia coli K12 and O157.</title>
        <authorList>
            <person name="Jin Q."/>
            <person name="Yuan Z."/>
            <person name="Xu J."/>
            <person name="Wang Y."/>
            <person name="Shen Y."/>
            <person name="Lu W."/>
            <person name="Wang J."/>
            <person name="Liu H."/>
            <person name="Yang J."/>
            <person name="Yang F."/>
            <person name="Zhang X."/>
            <person name="Zhang J."/>
            <person name="Yang G."/>
            <person name="Wu H."/>
            <person name="Qu D."/>
            <person name="Dong J."/>
            <person name="Sun L."/>
            <person name="Xue Y."/>
            <person name="Zhao A."/>
            <person name="Gao Y."/>
            <person name="Zhu J."/>
            <person name="Kan B."/>
            <person name="Ding K."/>
            <person name="Chen S."/>
            <person name="Cheng H."/>
            <person name="Yao Z."/>
            <person name="He B."/>
            <person name="Chen R."/>
            <person name="Ma D."/>
            <person name="Qiang B."/>
            <person name="Wen Y."/>
            <person name="Hou Y."/>
            <person name="Yu J."/>
        </authorList>
    </citation>
    <scope>NUCLEOTIDE SEQUENCE [LARGE SCALE GENOMIC DNA]</scope>
    <source>
        <strain>301 / Serotype 2a</strain>
    </source>
</reference>
<reference key="2">
    <citation type="journal article" date="2003" name="Infect. Immun.">
        <title>Complete genome sequence and comparative genomics of Shigella flexneri serotype 2a strain 2457T.</title>
        <authorList>
            <person name="Wei J."/>
            <person name="Goldberg M.B."/>
            <person name="Burland V."/>
            <person name="Venkatesan M.M."/>
            <person name="Deng W."/>
            <person name="Fournier G."/>
            <person name="Mayhew G.F."/>
            <person name="Plunkett G. III"/>
            <person name="Rose D.J."/>
            <person name="Darling A."/>
            <person name="Mau B."/>
            <person name="Perna N.T."/>
            <person name="Payne S.M."/>
            <person name="Runyen-Janecky L.J."/>
            <person name="Zhou S."/>
            <person name="Schwartz D.C."/>
            <person name="Blattner F.R."/>
        </authorList>
    </citation>
    <scope>NUCLEOTIDE SEQUENCE [LARGE SCALE GENOMIC DNA]</scope>
    <source>
        <strain>ATCC 700930 / 2457T / Serotype 2a</strain>
    </source>
</reference>
<name>SLYA_SHIFL</name>
<evidence type="ECO:0000255" key="1">
    <source>
        <dbReference type="HAMAP-Rule" id="MF_01819"/>
    </source>
</evidence>
<evidence type="ECO:0000305" key="2"/>
<comment type="function">
    <text evidence="1">Transcription regulator that can specifically activate or repress expression of target genes.</text>
</comment>
<comment type="subunit">
    <text evidence="1">Homodimer.</text>
</comment>
<comment type="similarity">
    <text evidence="1">Belongs to the SlyA family.</text>
</comment>
<comment type="sequence caution" evidence="2">
    <conflict type="erroneous initiation">
        <sequence resource="EMBL-CDS" id="AAN43251"/>
    </conflict>
    <text>Extended N-terminus.</text>
</comment>
<comment type="sequence caution" evidence="2">
    <conflict type="erroneous initiation">
        <sequence resource="EMBL-CDS" id="AAP17137"/>
    </conflict>
    <text>Extended N-terminus.</text>
</comment>
<feature type="chain" id="PRO_0000054395" description="Transcriptional regulator SlyA">
    <location>
        <begin position="1"/>
        <end position="144"/>
    </location>
</feature>
<feature type="domain" description="HTH marR-type" evidence="1">
    <location>
        <begin position="2"/>
        <end position="135"/>
    </location>
</feature>
<feature type="DNA-binding region" description="H-T-H motif" evidence="1">
    <location>
        <begin position="49"/>
        <end position="72"/>
    </location>
</feature>
<keyword id="KW-0010">Activator</keyword>
<keyword id="KW-0238">DNA-binding</keyword>
<keyword id="KW-1185">Reference proteome</keyword>
<keyword id="KW-0678">Repressor</keyword>
<keyword id="KW-0804">Transcription</keyword>
<keyword id="KW-0805">Transcription regulation</keyword>
<keyword id="KW-0843">Virulence</keyword>
<proteinExistence type="inferred from homology"/>
<gene>
    <name evidence="1" type="primary">slyA</name>
    <name type="ordered locus">SF1669</name>
    <name type="ordered locus">S1801</name>
</gene>
<sequence length="144" mass="16353">MESPLGSDLARLVRIWRALIDHRLKPLELTQTHWVTLHNIHQLPPDQSQIQLAKAIGIEQPSLVRTLDQLEEKGLISRQTCASDRRAKRIKLTEKAEPLISEMEAVINKTRAEILHGISAEELEQLITLIAKLEHNIIELQAKG</sequence>
<dbReference type="EMBL" id="AE005674">
    <property type="protein sequence ID" value="AAN43251.1"/>
    <property type="status" value="ALT_INIT"/>
    <property type="molecule type" value="Genomic_DNA"/>
</dbReference>
<dbReference type="EMBL" id="AE014073">
    <property type="protein sequence ID" value="AAP17137.1"/>
    <property type="status" value="ALT_INIT"/>
    <property type="molecule type" value="Genomic_DNA"/>
</dbReference>
<dbReference type="RefSeq" id="NP_707544.3">
    <property type="nucleotide sequence ID" value="NC_004337.2"/>
</dbReference>
<dbReference type="RefSeq" id="WP_001296943.1">
    <property type="nucleotide sequence ID" value="NZ_WPGW01000025.1"/>
</dbReference>
<dbReference type="SMR" id="P0A8W4"/>
<dbReference type="STRING" id="198214.SF1669"/>
<dbReference type="PaxDb" id="198214-SF1669"/>
<dbReference type="GeneID" id="1024872"/>
<dbReference type="GeneID" id="93775796"/>
<dbReference type="KEGG" id="sfl:SF1669"/>
<dbReference type="KEGG" id="sfx:S1801"/>
<dbReference type="PATRIC" id="fig|198214.7.peg.1966"/>
<dbReference type="HOGENOM" id="CLU_083287_18_2_6"/>
<dbReference type="Proteomes" id="UP000001006">
    <property type="component" value="Chromosome"/>
</dbReference>
<dbReference type="Proteomes" id="UP000002673">
    <property type="component" value="Chromosome"/>
</dbReference>
<dbReference type="GO" id="GO:0003677">
    <property type="term" value="F:DNA binding"/>
    <property type="evidence" value="ECO:0007669"/>
    <property type="project" value="UniProtKB-UniRule"/>
</dbReference>
<dbReference type="GO" id="GO:0003700">
    <property type="term" value="F:DNA-binding transcription factor activity"/>
    <property type="evidence" value="ECO:0007669"/>
    <property type="project" value="UniProtKB-UniRule"/>
</dbReference>
<dbReference type="GO" id="GO:0006950">
    <property type="term" value="P:response to stress"/>
    <property type="evidence" value="ECO:0007669"/>
    <property type="project" value="TreeGrafter"/>
</dbReference>
<dbReference type="FunFam" id="1.10.10.10:FF:000261">
    <property type="entry name" value="Transcriptional regulator SlyA"/>
    <property type="match status" value="1"/>
</dbReference>
<dbReference type="Gene3D" id="1.10.10.10">
    <property type="entry name" value="Winged helix-like DNA-binding domain superfamily/Winged helix DNA-binding domain"/>
    <property type="match status" value="1"/>
</dbReference>
<dbReference type="HAMAP" id="MF_01819">
    <property type="entry name" value="HTH_type_SlyA"/>
    <property type="match status" value="1"/>
</dbReference>
<dbReference type="InterPro" id="IPR000835">
    <property type="entry name" value="HTH_MarR-typ"/>
</dbReference>
<dbReference type="InterPro" id="IPR039422">
    <property type="entry name" value="MarR/SlyA-like"/>
</dbReference>
<dbReference type="InterPro" id="IPR023187">
    <property type="entry name" value="Tscrpt_reg_MarR-type_CS"/>
</dbReference>
<dbReference type="InterPro" id="IPR023071">
    <property type="entry name" value="Tscrpt_reg_SlyA"/>
</dbReference>
<dbReference type="InterPro" id="IPR036388">
    <property type="entry name" value="WH-like_DNA-bd_sf"/>
</dbReference>
<dbReference type="InterPro" id="IPR036390">
    <property type="entry name" value="WH_DNA-bd_sf"/>
</dbReference>
<dbReference type="NCBIfam" id="NF002926">
    <property type="entry name" value="PRK03573.1"/>
    <property type="match status" value="1"/>
</dbReference>
<dbReference type="PANTHER" id="PTHR33164:SF64">
    <property type="entry name" value="TRANSCRIPTIONAL REGULATOR SLYA"/>
    <property type="match status" value="1"/>
</dbReference>
<dbReference type="PANTHER" id="PTHR33164">
    <property type="entry name" value="TRANSCRIPTIONAL REGULATOR, MARR FAMILY"/>
    <property type="match status" value="1"/>
</dbReference>
<dbReference type="Pfam" id="PF01047">
    <property type="entry name" value="MarR"/>
    <property type="match status" value="1"/>
</dbReference>
<dbReference type="PRINTS" id="PR00598">
    <property type="entry name" value="HTHMARR"/>
</dbReference>
<dbReference type="SMART" id="SM00347">
    <property type="entry name" value="HTH_MARR"/>
    <property type="match status" value="1"/>
</dbReference>
<dbReference type="SUPFAM" id="SSF46785">
    <property type="entry name" value="Winged helix' DNA-binding domain"/>
    <property type="match status" value="1"/>
</dbReference>
<dbReference type="PROSITE" id="PS01117">
    <property type="entry name" value="HTH_MARR_1"/>
    <property type="match status" value="1"/>
</dbReference>
<dbReference type="PROSITE" id="PS50995">
    <property type="entry name" value="HTH_MARR_2"/>
    <property type="match status" value="1"/>
</dbReference>
<organism>
    <name type="scientific">Shigella flexneri</name>
    <dbReference type="NCBI Taxonomy" id="623"/>
    <lineage>
        <taxon>Bacteria</taxon>
        <taxon>Pseudomonadati</taxon>
        <taxon>Pseudomonadota</taxon>
        <taxon>Gammaproteobacteria</taxon>
        <taxon>Enterobacterales</taxon>
        <taxon>Enterobacteriaceae</taxon>
        <taxon>Shigella</taxon>
    </lineage>
</organism>
<accession>P0A8W4</accession>
<accession>P55740</accession>